<dbReference type="EMBL" id="AE005672">
    <property type="protein sequence ID" value="AAK75333.1"/>
    <property type="molecule type" value="Genomic_DNA"/>
</dbReference>
<dbReference type="RefSeq" id="WP_000722076.1">
    <property type="nucleotide sequence ID" value="NZ_CP155539.1"/>
</dbReference>
<dbReference type="PDB" id="1NXO">
    <property type="method" value="X-ray"/>
    <property type="resolution" value="1.85 A"/>
    <property type="chains" value="A=2-119"/>
</dbReference>
<dbReference type="PDB" id="1NXP">
    <property type="method" value="X-ray"/>
    <property type="resolution" value="1.82 A"/>
    <property type="chains" value="A=2-119"/>
</dbReference>
<dbReference type="PDB" id="1NXT">
    <property type="method" value="X-ray"/>
    <property type="resolution" value="2.34 A"/>
    <property type="chains" value="A=2-119"/>
</dbReference>
<dbReference type="PDB" id="1NXV">
    <property type="method" value="X-ray"/>
    <property type="resolution" value="2.00 A"/>
    <property type="chains" value="A=1-120"/>
</dbReference>
<dbReference type="PDB" id="1NXW">
    <property type="method" value="X-ray"/>
    <property type="resolution" value="1.92 A"/>
    <property type="chains" value="A=2-119"/>
</dbReference>
<dbReference type="PDB" id="1NXX">
    <property type="method" value="X-ray"/>
    <property type="resolution" value="1.90 A"/>
    <property type="chains" value="A=1-120"/>
</dbReference>
<dbReference type="PDB" id="2A9R">
    <property type="method" value="X-ray"/>
    <property type="resolution" value="2.34 A"/>
    <property type="chains" value="A=2-119"/>
</dbReference>
<dbReference type="PDB" id="6EB7">
    <property type="method" value="X-ray"/>
    <property type="resolution" value="1.58 A"/>
    <property type="chains" value="A=2-118"/>
</dbReference>
<dbReference type="PDB" id="6EBB">
    <property type="method" value="X-ray"/>
    <property type="resolution" value="2.02 A"/>
    <property type="chains" value="A=1-120"/>
</dbReference>
<dbReference type="PDB" id="6EBR">
    <property type="method" value="X-ray"/>
    <property type="resolution" value="1.82 A"/>
    <property type="chains" value="A=1-120"/>
</dbReference>
<dbReference type="PDBsum" id="1NXO"/>
<dbReference type="PDBsum" id="1NXP"/>
<dbReference type="PDBsum" id="1NXT"/>
<dbReference type="PDBsum" id="1NXV"/>
<dbReference type="PDBsum" id="1NXW"/>
<dbReference type="PDBsum" id="1NXX"/>
<dbReference type="PDBsum" id="2A9R"/>
<dbReference type="PDBsum" id="6EB7"/>
<dbReference type="PDBsum" id="6EBB"/>
<dbReference type="PDBsum" id="6EBR"/>
<dbReference type="SMR" id="A0A0H2UQ68"/>
<dbReference type="PaxDb" id="170187-SP_1227"/>
<dbReference type="EnsemblBacteria" id="AAK75333">
    <property type="protein sequence ID" value="AAK75333"/>
    <property type="gene ID" value="SP_1227"/>
</dbReference>
<dbReference type="GeneID" id="45653482"/>
<dbReference type="KEGG" id="spn:SP_1227"/>
<dbReference type="eggNOG" id="COG0745">
    <property type="taxonomic scope" value="Bacteria"/>
</dbReference>
<dbReference type="PhylomeDB" id="A0A0H2UQ68"/>
<dbReference type="BioCyc" id="SPNE170187:G1FZB-1241-MONOMER"/>
<dbReference type="EvolutionaryTrace" id="A0A0H2UQ68"/>
<dbReference type="Proteomes" id="UP000000585">
    <property type="component" value="Chromosome"/>
</dbReference>
<dbReference type="GO" id="GO:0005829">
    <property type="term" value="C:cytosol"/>
    <property type="evidence" value="ECO:0000314"/>
    <property type="project" value="UniProtKB"/>
</dbReference>
<dbReference type="GO" id="GO:0016020">
    <property type="term" value="C:membrane"/>
    <property type="evidence" value="ECO:0000314"/>
    <property type="project" value="UniProtKB"/>
</dbReference>
<dbReference type="GO" id="GO:0032993">
    <property type="term" value="C:protein-DNA complex"/>
    <property type="evidence" value="ECO:0007669"/>
    <property type="project" value="TreeGrafter"/>
</dbReference>
<dbReference type="GO" id="GO:0000987">
    <property type="term" value="F:cis-regulatory region sequence-specific DNA binding"/>
    <property type="evidence" value="ECO:0000314"/>
    <property type="project" value="UniProtKB"/>
</dbReference>
<dbReference type="GO" id="GO:0000156">
    <property type="term" value="F:phosphorelay response regulator activity"/>
    <property type="evidence" value="ECO:0007669"/>
    <property type="project" value="TreeGrafter"/>
</dbReference>
<dbReference type="GO" id="GO:0006633">
    <property type="term" value="P:fatty acid biosynthetic process"/>
    <property type="evidence" value="ECO:0000315"/>
    <property type="project" value="UniProtKB"/>
</dbReference>
<dbReference type="GO" id="GO:0045892">
    <property type="term" value="P:negative regulation of DNA-templated transcription"/>
    <property type="evidence" value="ECO:0000314"/>
    <property type="project" value="UniProtKB"/>
</dbReference>
<dbReference type="CDD" id="cd17614">
    <property type="entry name" value="REC_OmpR_YycF-like"/>
    <property type="match status" value="1"/>
</dbReference>
<dbReference type="CDD" id="cd00383">
    <property type="entry name" value="trans_reg_C"/>
    <property type="match status" value="1"/>
</dbReference>
<dbReference type="FunFam" id="1.10.10.10:FF:000089">
    <property type="entry name" value="Alkaline phosphatase synthesis response regulator"/>
    <property type="match status" value="1"/>
</dbReference>
<dbReference type="FunFam" id="3.40.50.2300:FF:000052">
    <property type="entry name" value="DNA-binding response regulator YycF"/>
    <property type="match status" value="1"/>
</dbReference>
<dbReference type="Gene3D" id="3.40.50.2300">
    <property type="match status" value="1"/>
</dbReference>
<dbReference type="Gene3D" id="6.10.250.690">
    <property type="match status" value="1"/>
</dbReference>
<dbReference type="Gene3D" id="1.10.10.10">
    <property type="entry name" value="Winged helix-like DNA-binding domain superfamily/Winged helix DNA-binding domain"/>
    <property type="match status" value="1"/>
</dbReference>
<dbReference type="InterPro" id="IPR011006">
    <property type="entry name" value="CheY-like_superfamily"/>
</dbReference>
<dbReference type="InterPro" id="IPR001867">
    <property type="entry name" value="OmpR/PhoB-type_DNA-bd"/>
</dbReference>
<dbReference type="InterPro" id="IPR047791">
    <property type="entry name" value="Resp_reg_WalR"/>
</dbReference>
<dbReference type="InterPro" id="IPR016032">
    <property type="entry name" value="Sig_transdc_resp-reg_C-effctor"/>
</dbReference>
<dbReference type="InterPro" id="IPR001789">
    <property type="entry name" value="Sig_transdc_resp-reg_receiver"/>
</dbReference>
<dbReference type="InterPro" id="IPR039420">
    <property type="entry name" value="WalR-like"/>
</dbReference>
<dbReference type="InterPro" id="IPR036388">
    <property type="entry name" value="WH-like_DNA-bd_sf"/>
</dbReference>
<dbReference type="NCBIfam" id="NF040534">
    <property type="entry name" value="resp_reg_YycF"/>
    <property type="match status" value="1"/>
</dbReference>
<dbReference type="PANTHER" id="PTHR48111:SF40">
    <property type="entry name" value="PHOSPHATE REGULON TRANSCRIPTIONAL REGULATORY PROTEIN PHOB"/>
    <property type="match status" value="1"/>
</dbReference>
<dbReference type="PANTHER" id="PTHR48111">
    <property type="entry name" value="REGULATOR OF RPOS"/>
    <property type="match status" value="1"/>
</dbReference>
<dbReference type="Pfam" id="PF00072">
    <property type="entry name" value="Response_reg"/>
    <property type="match status" value="1"/>
</dbReference>
<dbReference type="Pfam" id="PF00486">
    <property type="entry name" value="Trans_reg_C"/>
    <property type="match status" value="1"/>
</dbReference>
<dbReference type="SMART" id="SM00448">
    <property type="entry name" value="REC"/>
    <property type="match status" value="1"/>
</dbReference>
<dbReference type="SMART" id="SM00862">
    <property type="entry name" value="Trans_reg_C"/>
    <property type="match status" value="1"/>
</dbReference>
<dbReference type="SUPFAM" id="SSF46894">
    <property type="entry name" value="C-terminal effector domain of the bipartite response regulators"/>
    <property type="match status" value="1"/>
</dbReference>
<dbReference type="SUPFAM" id="SSF52172">
    <property type="entry name" value="CheY-like"/>
    <property type="match status" value="1"/>
</dbReference>
<dbReference type="PROSITE" id="PS51755">
    <property type="entry name" value="OMPR_PHOB"/>
    <property type="match status" value="1"/>
</dbReference>
<dbReference type="PROSITE" id="PS50110">
    <property type="entry name" value="RESPONSE_REGULATORY"/>
    <property type="match status" value="1"/>
</dbReference>
<name>WALR_STRPN</name>
<protein>
    <recommendedName>
        <fullName evidence="11">Transcriptional regulatory protein WalR</fullName>
    </recommendedName>
</protein>
<gene>
    <name evidence="10" type="primary">walR</name>
    <name evidence="9" type="synonym">rr02</name>
    <name evidence="10" type="synonym">vicR</name>
    <name evidence="10" type="synonym">yycF</name>
    <name evidence="12" type="ordered locus">SP_1227</name>
</gene>
<sequence length="234" mass="26816">MKKILIVDDEKPISDIIKFNMTKEGYEVVTAFNGREALEQFEAEQPDIIILDLMLPEIDGLEVAKTIRKTSSVPILMLSAKDSEFDKVIGLELGADDYVTKPFSNRELQARVKALLRRSQPMPVDGQEADSKPQPIQIGDLEIVPDAYVAKKYGEELDLTHREFELLYHLASHTGQVITREHLLETVWGYDYFGDVRTVDVTVRRLREKIEDTPSRPEYILTRRGVGYYMRNNA</sequence>
<evidence type="ECO:0000250" key="1">
    <source>
        <dbReference type="UniProtKB" id="A0A0H2ZN37"/>
    </source>
</evidence>
<evidence type="ECO:0000250" key="2">
    <source>
        <dbReference type="UniProtKB" id="P37478"/>
    </source>
</evidence>
<evidence type="ECO:0000250" key="3">
    <source>
        <dbReference type="UniProtKB" id="Q8DPL7"/>
    </source>
</evidence>
<evidence type="ECO:0000255" key="4">
    <source>
        <dbReference type="PROSITE-ProRule" id="PRU00169"/>
    </source>
</evidence>
<evidence type="ECO:0000255" key="5">
    <source>
        <dbReference type="PROSITE-ProRule" id="PRU01091"/>
    </source>
</evidence>
<evidence type="ECO:0000269" key="6">
    <source>
    </source>
</evidence>
<evidence type="ECO:0000269" key="7">
    <source>
    </source>
</evidence>
<evidence type="ECO:0000269" key="8">
    <source>
    </source>
</evidence>
<evidence type="ECO:0000303" key="9">
    <source>
    </source>
</evidence>
<evidence type="ECO:0000303" key="10">
    <source>
    </source>
</evidence>
<evidence type="ECO:0000305" key="11"/>
<evidence type="ECO:0000312" key="12">
    <source>
        <dbReference type="EMBL" id="AAK75333.1"/>
    </source>
</evidence>
<evidence type="ECO:0000312" key="13">
    <source>
        <dbReference type="Proteomes" id="UP000000585"/>
    </source>
</evidence>
<evidence type="ECO:0007744" key="14">
    <source>
        <dbReference type="PDB" id="1NXO"/>
    </source>
</evidence>
<evidence type="ECO:0007744" key="15">
    <source>
        <dbReference type="PDB" id="1NXP"/>
    </source>
</evidence>
<evidence type="ECO:0007744" key="16">
    <source>
        <dbReference type="PDB" id="1NXT"/>
    </source>
</evidence>
<evidence type="ECO:0007744" key="17">
    <source>
        <dbReference type="PDB" id="1NXW"/>
    </source>
</evidence>
<evidence type="ECO:0007744" key="18">
    <source>
        <dbReference type="PDB" id="2A9R"/>
    </source>
</evidence>
<evidence type="ECO:0007744" key="19">
    <source>
        <dbReference type="PDB" id="6EB7"/>
    </source>
</evidence>
<evidence type="ECO:0007744" key="20">
    <source>
        <dbReference type="PDB" id="6EBB"/>
    </source>
</evidence>
<evidence type="ECO:0007744" key="21">
    <source>
        <dbReference type="PDB" id="6EBR"/>
    </source>
</evidence>
<evidence type="ECO:0007829" key="22">
    <source>
        <dbReference type="PDB" id="6EB7"/>
    </source>
</evidence>
<keyword id="KW-0002">3D-structure</keyword>
<keyword id="KW-0963">Cytoplasm</keyword>
<keyword id="KW-0238">DNA-binding</keyword>
<keyword id="KW-0597">Phosphoprotein</keyword>
<keyword id="KW-1185">Reference proteome</keyword>
<keyword id="KW-0804">Transcription</keyword>
<keyword id="KW-0805">Transcription regulation</keyword>
<keyword id="KW-0902">Two-component regulatory system</keyword>
<accession>A0A0H2UQ68</accession>
<proteinExistence type="evidence at protein level"/>
<organism evidence="13">
    <name type="scientific">Streptococcus pneumoniae serotype 4 (strain ATCC BAA-334 / TIGR4)</name>
    <dbReference type="NCBI Taxonomy" id="170187"/>
    <lineage>
        <taxon>Bacteria</taxon>
        <taxon>Bacillati</taxon>
        <taxon>Bacillota</taxon>
        <taxon>Bacilli</taxon>
        <taxon>Lactobacillales</taxon>
        <taxon>Streptococcaceae</taxon>
        <taxon>Streptococcus</taxon>
    </lineage>
</organism>
<comment type="function">
    <text evidence="1 2 3 7 8">Member of the two-component regulatory system WalK/WalR that regulates genes involved in cell wall metabolism (By similarity). Binds to the promoter region of the transcription factor fabT gene in the fabTH-acp operon in vitro (PubMed:27610104). Inhibits transcription of fabT, probably acting in an unphosphorylated form, thereby playing a role in the regulation of fatty acid biosynthesis (PubMed:15774879, PubMed:27610104). Essential for normal growth in vitro (By similarity). Required for maintaining normal cellular morphology, acting, at least in part, by regulating peptidoglycan hydrolase pcsB (By similarity). Involved in maintaining expression of WalRK regulon genes in exponentially growing cells (By similarity).</text>
</comment>
<comment type="subunit">
    <text evidence="6 8">Monomer (PubMed:27610104). Homodimer (PubMed:15090529).</text>
</comment>
<comment type="subcellular location">
    <subcellularLocation>
        <location evidence="1">Cytoplasm</location>
    </subcellularLocation>
    <text evidence="1">Localized to cytoplasm around nucleoids in exponentially growing cells.</text>
</comment>
<comment type="PTM">
    <text evidence="1">Phosphorylated by WalK; can also be dephosphorylated by WalK.</text>
</comment>
<comment type="miscellaneous">
    <text evidence="3">Part of a walR-walK-walJ operon.</text>
</comment>
<reference evidence="13" key="1">
    <citation type="journal article" date="2001" name="Science">
        <title>Complete genome sequence of a virulent isolate of Streptococcus pneumoniae.</title>
        <authorList>
            <person name="Tettelin H."/>
            <person name="Nelson K.E."/>
            <person name="Paulsen I.T."/>
            <person name="Eisen J.A."/>
            <person name="Read T.D."/>
            <person name="Peterson S.N."/>
            <person name="Heidelberg J.F."/>
            <person name="DeBoy R.T."/>
            <person name="Haft D.H."/>
            <person name="Dodson R.J."/>
            <person name="Durkin A.S."/>
            <person name="Gwinn M.L."/>
            <person name="Kolonay J.F."/>
            <person name="Nelson W.C."/>
            <person name="Peterson J.D."/>
            <person name="Umayam L.A."/>
            <person name="White O."/>
            <person name="Salzberg S.L."/>
            <person name="Lewis M.R."/>
            <person name="Radune D."/>
            <person name="Holtzapple E.K."/>
            <person name="Khouri H.M."/>
            <person name="Wolf A.M."/>
            <person name="Utterback T.R."/>
            <person name="Hansen C.L."/>
            <person name="McDonald L.A."/>
            <person name="Feldblyum T.V."/>
            <person name="Angiuoli S.V."/>
            <person name="Dickinson T."/>
            <person name="Hickey E.K."/>
            <person name="Holt I.E."/>
            <person name="Loftus B.J."/>
            <person name="Yang F."/>
            <person name="Smith H.O."/>
            <person name="Venter J.C."/>
            <person name="Dougherty B.A."/>
            <person name="Morrison D.A."/>
            <person name="Hollingshead S.K."/>
            <person name="Fraser C.M."/>
        </authorList>
    </citation>
    <scope>NUCLEOTIDE SEQUENCE [LARGE SCALE GENOMIC DNA]</scope>
    <source>
        <strain evidence="13">ATCC BAA-334 / TIGR4</strain>
    </source>
</reference>
<reference evidence="11" key="2">
    <citation type="journal article" date="2005" name="J. Bacteriol.">
        <title>Evidence that the essential response regulator YycF in Streptococcus pneumoniae modulates expression of fatty acid biosynthesis genes and alters membrane composition.</title>
        <authorList>
            <person name="Mohedano M.L."/>
            <person name="Overweg K."/>
            <person name="de la Fuente A."/>
            <person name="Reuter M."/>
            <person name="Altabe S."/>
            <person name="Mulholland F."/>
            <person name="de Mendoza D."/>
            <person name="Lopez P."/>
            <person name="Wells J.M."/>
        </authorList>
    </citation>
    <scope>FUNCTION</scope>
</reference>
<reference evidence="11" key="3">
    <citation type="journal article" date="2016" name="Front. Microbiol.">
        <title>The Response Regulator YycF Inhibits Expression of the Fatty Acid Biosynthesis Repressor FabT in Streptococcus pneumoniae.</title>
        <authorList>
            <person name="Mohedano M.L."/>
            <person name="Amblar M."/>
            <person name="de la Fuente A."/>
            <person name="Wells J.M."/>
            <person name="Lopez P."/>
        </authorList>
    </citation>
    <scope>FUNCTION</scope>
    <scope>SUBUNIT</scope>
</reference>
<reference evidence="14 15 16 17" key="4">
    <citation type="journal article" date="2004" name="J. Bacteriol.">
        <title>Crystal structure of the response regulator 02 receiver domain, the essential YycF two-component system of Streptococcus pneumoniae in both complexed and native states.</title>
        <authorList>
            <person name="Bent C.J."/>
            <person name="Isaacs N.W."/>
            <person name="Mitchell T.J."/>
            <person name="Riboldi-Tunnicliffe A."/>
        </authorList>
    </citation>
    <scope>X-RAY CRYSTALLOGRAPHY (1.82 ANGSTROMS) OF 2-119</scope>
    <scope>SUBUNIT</scope>
</reference>
<reference evidence="18 19 20 21" key="5">
    <citation type="submission" date="2018-08" db="PDB data bank">
        <title>Activation of RR02 bound to BeF3.</title>
        <authorList>
            <person name="Riboldi-Tunnicliffe A."/>
        </authorList>
    </citation>
    <scope>X-RAY CRYSTALLOGRAPHY (1.82 ANGSTROMS) OF 1-120</scope>
</reference>
<feature type="chain" id="PRO_0000459005" description="Transcriptional regulatory protein WalR">
    <location>
        <begin position="1"/>
        <end position="234"/>
    </location>
</feature>
<feature type="domain" description="Response regulatory" evidence="4">
    <location>
        <begin position="3"/>
        <end position="116"/>
    </location>
</feature>
<feature type="DNA-binding region" description="OmpR/PhoB-type" evidence="5">
    <location>
        <begin position="133"/>
        <end position="232"/>
    </location>
</feature>
<feature type="modified residue" description="4-aspartylphosphate" evidence="4">
    <location>
        <position position="52"/>
    </location>
</feature>
<feature type="strand" evidence="22">
    <location>
        <begin position="3"/>
        <end position="7"/>
    </location>
</feature>
<feature type="helix" evidence="22">
    <location>
        <begin position="11"/>
        <end position="23"/>
    </location>
</feature>
<feature type="strand" evidence="22">
    <location>
        <begin position="27"/>
        <end position="33"/>
    </location>
</feature>
<feature type="helix" evidence="22">
    <location>
        <begin position="34"/>
        <end position="44"/>
    </location>
</feature>
<feature type="strand" evidence="22">
    <location>
        <begin position="47"/>
        <end position="51"/>
    </location>
</feature>
<feature type="strand" evidence="22">
    <location>
        <begin position="56"/>
        <end position="58"/>
    </location>
</feature>
<feature type="helix" evidence="22">
    <location>
        <begin position="60"/>
        <end position="68"/>
    </location>
</feature>
<feature type="strand" evidence="22">
    <location>
        <begin position="75"/>
        <end position="80"/>
    </location>
</feature>
<feature type="helix" evidence="22">
    <location>
        <begin position="84"/>
        <end position="92"/>
    </location>
</feature>
<feature type="strand" evidence="22">
    <location>
        <begin position="96"/>
        <end position="102"/>
    </location>
</feature>
<feature type="helix" evidence="22">
    <location>
        <begin position="105"/>
        <end position="117"/>
    </location>
</feature>